<sequence>MVGVKPVGSDPDFQPELSGAGSRLAVVKFTMRGCGPCLRIAPAFSSMSNKYPQAVFLEVDVHQCQGTAATNNISATPTFLFFRNKVRIDQYQGADAVGLEEKIKQHLENDPGSNEDADIPKGYMDLMPFINKAGCECLNESDEHGFDNCLRKDMSFLESDCDEQLLITVAFNQPVKLYSMKFQGPDNGQGPKYVKIFINLPRSMDFEEAERSEPTQALELTEDDIKEDGIVPLRYVKFQNVNSVTLFVQSNQGEEETTRISYFTFIGTPVQATNMNDFKRVVGKKGESH</sequence>
<accession>Q8CDN6</accession>
<accession>O70379</accession>
<accession>Q3TI92</accession>
<keyword id="KW-0963">Cytoplasm</keyword>
<keyword id="KW-1015">Disulfide bond</keyword>
<keyword id="KW-0249">Electron transport</keyword>
<keyword id="KW-0539">Nucleus</keyword>
<keyword id="KW-0597">Phosphoprotein</keyword>
<keyword id="KW-0647">Proteasome</keyword>
<keyword id="KW-0676">Redox-active center</keyword>
<keyword id="KW-1185">Reference proteome</keyword>
<keyword id="KW-0813">Transport</keyword>
<reference key="1">
    <citation type="journal article" date="1998" name="J. Biol. Chem.">
        <title>Purification, molecular cloning, and characterization of TRP32, a novel thioredoxin-related mammalian protein of 32 kDa.</title>
        <authorList>
            <person name="Lee K.-K."/>
            <person name="Murakawa M."/>
            <person name="Takahashi S."/>
            <person name="Tsubuki S."/>
            <person name="Kawashima S."/>
            <person name="Sakamaki K."/>
            <person name="Yonehara S."/>
        </authorList>
    </citation>
    <scope>NUCLEOTIDE SEQUENCE [MRNA]</scope>
</reference>
<reference key="2">
    <citation type="journal article" date="2005" name="Science">
        <title>The transcriptional landscape of the mammalian genome.</title>
        <authorList>
            <person name="Carninci P."/>
            <person name="Kasukawa T."/>
            <person name="Katayama S."/>
            <person name="Gough J."/>
            <person name="Frith M.C."/>
            <person name="Maeda N."/>
            <person name="Oyama R."/>
            <person name="Ravasi T."/>
            <person name="Lenhard B."/>
            <person name="Wells C."/>
            <person name="Kodzius R."/>
            <person name="Shimokawa K."/>
            <person name="Bajic V.B."/>
            <person name="Brenner S.E."/>
            <person name="Batalov S."/>
            <person name="Forrest A.R."/>
            <person name="Zavolan M."/>
            <person name="Davis M.J."/>
            <person name="Wilming L.G."/>
            <person name="Aidinis V."/>
            <person name="Allen J.E."/>
            <person name="Ambesi-Impiombato A."/>
            <person name="Apweiler R."/>
            <person name="Aturaliya R.N."/>
            <person name="Bailey T.L."/>
            <person name="Bansal M."/>
            <person name="Baxter L."/>
            <person name="Beisel K.W."/>
            <person name="Bersano T."/>
            <person name="Bono H."/>
            <person name="Chalk A.M."/>
            <person name="Chiu K.P."/>
            <person name="Choudhary V."/>
            <person name="Christoffels A."/>
            <person name="Clutterbuck D.R."/>
            <person name="Crowe M.L."/>
            <person name="Dalla E."/>
            <person name="Dalrymple B.P."/>
            <person name="de Bono B."/>
            <person name="Della Gatta G."/>
            <person name="di Bernardo D."/>
            <person name="Down T."/>
            <person name="Engstrom P."/>
            <person name="Fagiolini M."/>
            <person name="Faulkner G."/>
            <person name="Fletcher C.F."/>
            <person name="Fukushima T."/>
            <person name="Furuno M."/>
            <person name="Futaki S."/>
            <person name="Gariboldi M."/>
            <person name="Georgii-Hemming P."/>
            <person name="Gingeras T.R."/>
            <person name="Gojobori T."/>
            <person name="Green R.E."/>
            <person name="Gustincich S."/>
            <person name="Harbers M."/>
            <person name="Hayashi Y."/>
            <person name="Hensch T.K."/>
            <person name="Hirokawa N."/>
            <person name="Hill D."/>
            <person name="Huminiecki L."/>
            <person name="Iacono M."/>
            <person name="Ikeo K."/>
            <person name="Iwama A."/>
            <person name="Ishikawa T."/>
            <person name="Jakt M."/>
            <person name="Kanapin A."/>
            <person name="Katoh M."/>
            <person name="Kawasawa Y."/>
            <person name="Kelso J."/>
            <person name="Kitamura H."/>
            <person name="Kitano H."/>
            <person name="Kollias G."/>
            <person name="Krishnan S.P."/>
            <person name="Kruger A."/>
            <person name="Kummerfeld S.K."/>
            <person name="Kurochkin I.V."/>
            <person name="Lareau L.F."/>
            <person name="Lazarevic D."/>
            <person name="Lipovich L."/>
            <person name="Liu J."/>
            <person name="Liuni S."/>
            <person name="McWilliam S."/>
            <person name="Madan Babu M."/>
            <person name="Madera M."/>
            <person name="Marchionni L."/>
            <person name="Matsuda H."/>
            <person name="Matsuzawa S."/>
            <person name="Miki H."/>
            <person name="Mignone F."/>
            <person name="Miyake S."/>
            <person name="Morris K."/>
            <person name="Mottagui-Tabar S."/>
            <person name="Mulder N."/>
            <person name="Nakano N."/>
            <person name="Nakauchi H."/>
            <person name="Ng P."/>
            <person name="Nilsson R."/>
            <person name="Nishiguchi S."/>
            <person name="Nishikawa S."/>
            <person name="Nori F."/>
            <person name="Ohara O."/>
            <person name="Okazaki Y."/>
            <person name="Orlando V."/>
            <person name="Pang K.C."/>
            <person name="Pavan W.J."/>
            <person name="Pavesi G."/>
            <person name="Pesole G."/>
            <person name="Petrovsky N."/>
            <person name="Piazza S."/>
            <person name="Reed J."/>
            <person name="Reid J.F."/>
            <person name="Ring B.Z."/>
            <person name="Ringwald M."/>
            <person name="Rost B."/>
            <person name="Ruan Y."/>
            <person name="Salzberg S.L."/>
            <person name="Sandelin A."/>
            <person name="Schneider C."/>
            <person name="Schoenbach C."/>
            <person name="Sekiguchi K."/>
            <person name="Semple C.A."/>
            <person name="Seno S."/>
            <person name="Sessa L."/>
            <person name="Sheng Y."/>
            <person name="Shibata Y."/>
            <person name="Shimada H."/>
            <person name="Shimada K."/>
            <person name="Silva D."/>
            <person name="Sinclair B."/>
            <person name="Sperling S."/>
            <person name="Stupka E."/>
            <person name="Sugiura K."/>
            <person name="Sultana R."/>
            <person name="Takenaka Y."/>
            <person name="Taki K."/>
            <person name="Tammoja K."/>
            <person name="Tan S.L."/>
            <person name="Tang S."/>
            <person name="Taylor M.S."/>
            <person name="Tegner J."/>
            <person name="Teichmann S.A."/>
            <person name="Ueda H.R."/>
            <person name="van Nimwegen E."/>
            <person name="Verardo R."/>
            <person name="Wei C.L."/>
            <person name="Yagi K."/>
            <person name="Yamanishi H."/>
            <person name="Zabarovsky E."/>
            <person name="Zhu S."/>
            <person name="Zimmer A."/>
            <person name="Hide W."/>
            <person name="Bult C."/>
            <person name="Grimmond S.M."/>
            <person name="Teasdale R.D."/>
            <person name="Liu E.T."/>
            <person name="Brusic V."/>
            <person name="Quackenbush J."/>
            <person name="Wahlestedt C."/>
            <person name="Mattick J.S."/>
            <person name="Hume D.A."/>
            <person name="Kai C."/>
            <person name="Sasaki D."/>
            <person name="Tomaru Y."/>
            <person name="Fukuda S."/>
            <person name="Kanamori-Katayama M."/>
            <person name="Suzuki M."/>
            <person name="Aoki J."/>
            <person name="Arakawa T."/>
            <person name="Iida J."/>
            <person name="Imamura K."/>
            <person name="Itoh M."/>
            <person name="Kato T."/>
            <person name="Kawaji H."/>
            <person name="Kawagashira N."/>
            <person name="Kawashima T."/>
            <person name="Kojima M."/>
            <person name="Kondo S."/>
            <person name="Konno H."/>
            <person name="Nakano K."/>
            <person name="Ninomiya N."/>
            <person name="Nishio T."/>
            <person name="Okada M."/>
            <person name="Plessy C."/>
            <person name="Shibata K."/>
            <person name="Shiraki T."/>
            <person name="Suzuki S."/>
            <person name="Tagami M."/>
            <person name="Waki K."/>
            <person name="Watahiki A."/>
            <person name="Okamura-Oho Y."/>
            <person name="Suzuki H."/>
            <person name="Kawai J."/>
            <person name="Hayashizaki Y."/>
        </authorList>
    </citation>
    <scope>NUCLEOTIDE SEQUENCE [LARGE SCALE MRNA]</scope>
    <source>
        <strain>C57BL/6J</strain>
        <strain>DBA/2J</strain>
        <tissue>Amnion</tissue>
        <tissue>Bone marrow</tissue>
        <tissue>Testis</tissue>
    </source>
</reference>
<reference key="3">
    <citation type="journal article" date="2004" name="Genome Res.">
        <title>The status, quality, and expansion of the NIH full-length cDNA project: the Mammalian Gene Collection (MGC).</title>
        <authorList>
            <consortium name="The MGC Project Team"/>
        </authorList>
    </citation>
    <scope>NUCLEOTIDE SEQUENCE [LARGE SCALE MRNA]</scope>
    <source>
        <tissue>Brain</tissue>
    </source>
</reference>
<reference key="4">
    <citation type="journal article" date="2010" name="Cell">
        <title>A tissue-specific atlas of mouse protein phosphorylation and expression.</title>
        <authorList>
            <person name="Huttlin E.L."/>
            <person name="Jedrychowski M.P."/>
            <person name="Elias J.E."/>
            <person name="Goswami T."/>
            <person name="Rad R."/>
            <person name="Beausoleil S.A."/>
            <person name="Villen J."/>
            <person name="Haas W."/>
            <person name="Sowa M.E."/>
            <person name="Gygi S.P."/>
        </authorList>
    </citation>
    <scope>IDENTIFICATION BY MASS SPECTROMETRY [LARGE SCALE ANALYSIS]</scope>
    <source>
        <tissue>Brain</tissue>
        <tissue>Brown adipose tissue</tissue>
        <tissue>Heart</tissue>
        <tissue>Kidney</tissue>
        <tissue>Liver</tissue>
        <tissue>Lung</tissue>
        <tissue>Pancreas</tissue>
        <tissue>Spleen</tissue>
        <tissue>Testis</tissue>
    </source>
</reference>
<evidence type="ECO:0000250" key="1"/>
<evidence type="ECO:0000250" key="2">
    <source>
        <dbReference type="UniProtKB" id="O43396"/>
    </source>
</evidence>
<evidence type="ECO:0000255" key="3">
    <source>
        <dbReference type="PROSITE-ProRule" id="PRU00864"/>
    </source>
</evidence>
<evidence type="ECO:0000305" key="4"/>
<protein>
    <recommendedName>
        <fullName>Thioredoxin-like protein 1</fullName>
    </recommendedName>
    <alternativeName>
        <fullName>32 kDa thioredoxin-related protein</fullName>
    </alternativeName>
</protein>
<dbReference type="EMBL" id="AF052660">
    <property type="protein sequence ID" value="AAC40183.1"/>
    <property type="molecule type" value="mRNA"/>
</dbReference>
<dbReference type="EMBL" id="AK029807">
    <property type="protein sequence ID" value="BAC26626.1"/>
    <property type="molecule type" value="mRNA"/>
</dbReference>
<dbReference type="EMBL" id="AK150326">
    <property type="protein sequence ID" value="BAE29469.1"/>
    <property type="molecule type" value="mRNA"/>
</dbReference>
<dbReference type="EMBL" id="AK167954">
    <property type="protein sequence ID" value="BAE39954.1"/>
    <property type="molecule type" value="mRNA"/>
</dbReference>
<dbReference type="EMBL" id="AK168712">
    <property type="protein sequence ID" value="BAE40554.1"/>
    <property type="molecule type" value="mRNA"/>
</dbReference>
<dbReference type="EMBL" id="BC061123">
    <property type="protein sequence ID" value="AAH61123.1"/>
    <property type="molecule type" value="mRNA"/>
</dbReference>
<dbReference type="CCDS" id="CCDS29297.1"/>
<dbReference type="RefSeq" id="NP_058072.2">
    <property type="nucleotide sequence ID" value="NM_016792.4"/>
</dbReference>
<dbReference type="BMRB" id="Q8CDN6"/>
<dbReference type="SMR" id="Q8CDN6"/>
<dbReference type="BioGRID" id="207304">
    <property type="interactions" value="55"/>
</dbReference>
<dbReference type="FunCoup" id="Q8CDN6">
    <property type="interactions" value="3432"/>
</dbReference>
<dbReference type="IntAct" id="Q8CDN6">
    <property type="interactions" value="2"/>
</dbReference>
<dbReference type="MINT" id="Q8CDN6"/>
<dbReference type="STRING" id="10090.ENSMUSP00000158375"/>
<dbReference type="GlyGen" id="Q8CDN6">
    <property type="glycosylation" value="1 site, 1 O-linked glycan (1 site)"/>
</dbReference>
<dbReference type="iPTMnet" id="Q8CDN6"/>
<dbReference type="PhosphoSitePlus" id="Q8CDN6"/>
<dbReference type="SwissPalm" id="Q8CDN6"/>
<dbReference type="REPRODUCTION-2DPAGE" id="Q8CDN6"/>
<dbReference type="jPOST" id="Q8CDN6"/>
<dbReference type="PaxDb" id="10090-ENSMUSP00000025476"/>
<dbReference type="ProteomicsDB" id="300164"/>
<dbReference type="Pumba" id="Q8CDN6"/>
<dbReference type="Antibodypedia" id="1038">
    <property type="antibodies" value="211 antibodies from 28 providers"/>
</dbReference>
<dbReference type="DNASU" id="53382"/>
<dbReference type="Ensembl" id="ENSMUST00000237004.2">
    <property type="protein sequence ID" value="ENSMUSP00000158375.2"/>
    <property type="gene ID" value="ENSMUSG00000024583.4"/>
</dbReference>
<dbReference type="GeneID" id="53382"/>
<dbReference type="KEGG" id="mmu:53382"/>
<dbReference type="UCSC" id="uc008fdx.1">
    <property type="organism name" value="mouse"/>
</dbReference>
<dbReference type="AGR" id="MGI:1860078"/>
<dbReference type="CTD" id="9352"/>
<dbReference type="MGI" id="MGI:1860078">
    <property type="gene designation" value="Txnl1"/>
</dbReference>
<dbReference type="VEuPathDB" id="HostDB:ENSMUSG00000024583"/>
<dbReference type="eggNOG" id="KOG0908">
    <property type="taxonomic scope" value="Eukaryota"/>
</dbReference>
<dbReference type="GeneTree" id="ENSGT00940000156170"/>
<dbReference type="HOGENOM" id="CLU_072377_0_2_1"/>
<dbReference type="InParanoid" id="Q8CDN6"/>
<dbReference type="OMA" id="PIFEMFP"/>
<dbReference type="OrthoDB" id="3236at9989"/>
<dbReference type="PhylomeDB" id="Q8CDN6"/>
<dbReference type="TreeFam" id="TF314399"/>
<dbReference type="Reactome" id="R-MMU-9013418">
    <property type="pathway name" value="RHOBTB2 GTPase cycle"/>
</dbReference>
<dbReference type="Reactome" id="R-MMU-9013420">
    <property type="pathway name" value="RHOU GTPase cycle"/>
</dbReference>
<dbReference type="Reactome" id="R-MMU-9013422">
    <property type="pathway name" value="RHOBTB1 GTPase cycle"/>
</dbReference>
<dbReference type="Reactome" id="R-MMU-9013424">
    <property type="pathway name" value="RHOV GTPase cycle"/>
</dbReference>
<dbReference type="Reactome" id="R-MMU-9696264">
    <property type="pathway name" value="RND3 GTPase cycle"/>
</dbReference>
<dbReference type="Reactome" id="R-MMU-9696270">
    <property type="pathway name" value="RND2 GTPase cycle"/>
</dbReference>
<dbReference type="Reactome" id="R-MMU-9696273">
    <property type="pathway name" value="RND1 GTPase cycle"/>
</dbReference>
<dbReference type="BioGRID-ORCS" id="53382">
    <property type="hits" value="4 hits in 78 CRISPR screens"/>
</dbReference>
<dbReference type="ChiTaRS" id="Txnl1">
    <property type="organism name" value="mouse"/>
</dbReference>
<dbReference type="PRO" id="PR:Q8CDN6"/>
<dbReference type="Proteomes" id="UP000000589">
    <property type="component" value="Chromosome 18"/>
</dbReference>
<dbReference type="RNAct" id="Q8CDN6">
    <property type="molecule type" value="protein"/>
</dbReference>
<dbReference type="Bgee" id="ENSMUSG00000024583">
    <property type="expression patterns" value="Expressed in urogenital fold and 262 other cell types or tissues"/>
</dbReference>
<dbReference type="ExpressionAtlas" id="Q8CDN6">
    <property type="expression patterns" value="baseline and differential"/>
</dbReference>
<dbReference type="GO" id="GO:0005829">
    <property type="term" value="C:cytosol"/>
    <property type="evidence" value="ECO:0007669"/>
    <property type="project" value="Ensembl"/>
</dbReference>
<dbReference type="GO" id="GO:0005634">
    <property type="term" value="C:nucleus"/>
    <property type="evidence" value="ECO:0007669"/>
    <property type="project" value="UniProtKB-SubCell"/>
</dbReference>
<dbReference type="GO" id="GO:0000502">
    <property type="term" value="C:proteasome complex"/>
    <property type="evidence" value="ECO:0007669"/>
    <property type="project" value="UniProtKB-KW"/>
</dbReference>
<dbReference type="GO" id="GO:0015036">
    <property type="term" value="F:disulfide oxidoreductase activity"/>
    <property type="evidence" value="ECO:0007669"/>
    <property type="project" value="Ensembl"/>
</dbReference>
<dbReference type="CDD" id="cd02947">
    <property type="entry name" value="TRX_family"/>
    <property type="match status" value="1"/>
</dbReference>
<dbReference type="FunFam" id="2.60.120.470:FF:000001">
    <property type="entry name" value="Thioredoxin-like 1, isoform CRA_c"/>
    <property type="match status" value="1"/>
</dbReference>
<dbReference type="FunFam" id="3.40.30.10:FF:000082">
    <property type="entry name" value="Thioredoxin-like protein 1"/>
    <property type="match status" value="1"/>
</dbReference>
<dbReference type="Gene3D" id="3.40.30.10">
    <property type="entry name" value="Glutaredoxin"/>
    <property type="match status" value="1"/>
</dbReference>
<dbReference type="Gene3D" id="2.60.120.470">
    <property type="entry name" value="PITH domain"/>
    <property type="match status" value="1"/>
</dbReference>
<dbReference type="InterPro" id="IPR008979">
    <property type="entry name" value="Galactose-bd-like_sf"/>
</dbReference>
<dbReference type="InterPro" id="IPR010400">
    <property type="entry name" value="PITH_dom"/>
</dbReference>
<dbReference type="InterPro" id="IPR037047">
    <property type="entry name" value="PITH_dom_sf"/>
</dbReference>
<dbReference type="InterPro" id="IPR036249">
    <property type="entry name" value="Thioredoxin-like_sf"/>
</dbReference>
<dbReference type="InterPro" id="IPR017937">
    <property type="entry name" value="Thioredoxin_CS"/>
</dbReference>
<dbReference type="InterPro" id="IPR013766">
    <property type="entry name" value="Thioredoxin_domain"/>
</dbReference>
<dbReference type="PANTHER" id="PTHR46115">
    <property type="entry name" value="THIOREDOXIN-LIKE PROTEIN 1"/>
    <property type="match status" value="1"/>
</dbReference>
<dbReference type="Pfam" id="PF06201">
    <property type="entry name" value="PITH"/>
    <property type="match status" value="1"/>
</dbReference>
<dbReference type="Pfam" id="PF00085">
    <property type="entry name" value="Thioredoxin"/>
    <property type="match status" value="1"/>
</dbReference>
<dbReference type="SUPFAM" id="SSF49785">
    <property type="entry name" value="Galactose-binding domain-like"/>
    <property type="match status" value="1"/>
</dbReference>
<dbReference type="SUPFAM" id="SSF52833">
    <property type="entry name" value="Thioredoxin-like"/>
    <property type="match status" value="1"/>
</dbReference>
<dbReference type="PROSITE" id="PS51532">
    <property type="entry name" value="PITH"/>
    <property type="match status" value="1"/>
</dbReference>
<dbReference type="PROSITE" id="PS00194">
    <property type="entry name" value="THIOREDOXIN_1"/>
    <property type="match status" value="1"/>
</dbReference>
<gene>
    <name type="primary">Txnl1</name>
    <name type="synonym">Trp32</name>
    <name type="synonym">Txnl</name>
</gene>
<organism>
    <name type="scientific">Mus musculus</name>
    <name type="common">Mouse</name>
    <dbReference type="NCBI Taxonomy" id="10090"/>
    <lineage>
        <taxon>Eukaryota</taxon>
        <taxon>Metazoa</taxon>
        <taxon>Chordata</taxon>
        <taxon>Craniata</taxon>
        <taxon>Vertebrata</taxon>
        <taxon>Euteleostomi</taxon>
        <taxon>Mammalia</taxon>
        <taxon>Eutheria</taxon>
        <taxon>Euarchontoglires</taxon>
        <taxon>Glires</taxon>
        <taxon>Rodentia</taxon>
        <taxon>Myomorpha</taxon>
        <taxon>Muroidea</taxon>
        <taxon>Muridae</taxon>
        <taxon>Murinae</taxon>
        <taxon>Mus</taxon>
        <taxon>Mus</taxon>
    </lineage>
</organism>
<feature type="chain" id="PRO_0000120017" description="Thioredoxin-like protein 1">
    <location>
        <begin position="1"/>
        <end position="289"/>
    </location>
</feature>
<feature type="domain" description="Thioredoxin">
    <location>
        <begin position="2"/>
        <end position="109"/>
    </location>
</feature>
<feature type="domain" description="PITH" evidence="3">
    <location>
        <begin position="115"/>
        <end position="285"/>
    </location>
</feature>
<feature type="modified residue" description="Phosphoserine" evidence="2">
    <location>
        <position position="113"/>
    </location>
</feature>
<feature type="disulfide bond" description="Redox-active" evidence="1">
    <location>
        <begin position="34"/>
        <end position="37"/>
    </location>
</feature>
<feature type="sequence conflict" description="In Ref. 1; AAC40183." evidence="4" ref="1">
    <original>N</original>
    <variation>K</variation>
    <location>
        <position position="251"/>
    </location>
</feature>
<comment type="function">
    <text evidence="1">Active thioredoxin with a redox potential of about -250 mV.</text>
</comment>
<comment type="subunit">
    <text evidence="1">Component of the 19S regulatory cap of the 26S proteasome. Interacts with PSMD14/RPN11. Interacts with, and reduces EEF1A1 (By similarity).</text>
</comment>
<comment type="subcellular location">
    <subcellularLocation>
        <location evidence="1">Cytoplasm</location>
    </subcellularLocation>
    <subcellularLocation>
        <location evidence="1">Nucleus</location>
    </subcellularLocation>
    <text evidence="1">At least 85% of the cellular TXNL1 is proteasome-associated.</text>
</comment>
<name>TXNL1_MOUSE</name>
<proteinExistence type="evidence at protein level"/>